<protein>
    <recommendedName>
        <fullName>Protein S100-A13</fullName>
    </recommendedName>
    <alternativeName>
        <fullName>S100 calcium-binding protein A13</fullName>
    </alternativeName>
</protein>
<name>S10AD_MOUSE</name>
<sequence length="98" mass="11158">MAAETLTELEAAIETVVSTFFTFAGREGRKGSLNINEFKELATQQLPHLLKDVGSLDEKMKTLDVNQDSELRFSEYWRLIGELAKEVRKEKALGIRKK</sequence>
<feature type="chain" id="PRO_0000144020" description="Protein S100-A13">
    <location>
        <begin position="1"/>
        <end position="98"/>
    </location>
</feature>
<feature type="domain" description="EF-hand">
    <location>
        <begin position="18"/>
        <end position="53"/>
    </location>
</feature>
<feature type="binding site" evidence="1">
    <location>
        <position position="32"/>
    </location>
    <ligand>
        <name>Ca(2+)</name>
        <dbReference type="ChEBI" id="CHEBI:29108"/>
        <label>1</label>
    </ligand>
</feature>
<feature type="binding site" evidence="1">
    <location>
        <position position="37"/>
    </location>
    <ligand>
        <name>Ca(2+)</name>
        <dbReference type="ChEBI" id="CHEBI:29108"/>
        <label>1</label>
    </ligand>
</feature>
<feature type="binding site" evidence="1">
    <location>
        <position position="64"/>
    </location>
    <ligand>
        <name>Ca(2+)</name>
        <dbReference type="ChEBI" id="CHEBI:29108"/>
        <label>2</label>
    </ligand>
</feature>
<feature type="binding site" evidence="1">
    <location>
        <position position="66"/>
    </location>
    <ligand>
        <name>Ca(2+)</name>
        <dbReference type="ChEBI" id="CHEBI:29108"/>
        <label>2</label>
    </ligand>
</feature>
<feature type="binding site" evidence="1">
    <location>
        <position position="68"/>
    </location>
    <ligand>
        <name>Ca(2+)</name>
        <dbReference type="ChEBI" id="CHEBI:29108"/>
        <label>2</label>
    </ligand>
</feature>
<feature type="binding site" evidence="1">
    <location>
        <position position="70"/>
    </location>
    <ligand>
        <name>Ca(2+)</name>
        <dbReference type="ChEBI" id="CHEBI:29108"/>
        <label>2</label>
    </ligand>
</feature>
<feature type="binding site" evidence="1">
    <location>
        <position position="75"/>
    </location>
    <ligand>
        <name>Ca(2+)</name>
        <dbReference type="ChEBI" id="CHEBI:29108"/>
        <label>2</label>
    </ligand>
</feature>
<feature type="modified residue" description="Phosphoserine" evidence="8">
    <location>
        <position position="32"/>
    </location>
</feature>
<feature type="helix" evidence="9">
    <location>
        <begin position="10"/>
        <end position="19"/>
    </location>
</feature>
<feature type="helix" evidence="9">
    <location>
        <begin position="21"/>
        <end position="26"/>
    </location>
</feature>
<feature type="strand" evidence="9">
    <location>
        <begin position="27"/>
        <end position="32"/>
    </location>
</feature>
<feature type="helix" evidence="9">
    <location>
        <begin position="37"/>
        <end position="40"/>
    </location>
</feature>
<feature type="helix" evidence="9">
    <location>
        <begin position="41"/>
        <end position="45"/>
    </location>
</feature>
<feature type="helix" evidence="9">
    <location>
        <begin position="56"/>
        <end position="65"/>
    </location>
</feature>
<feature type="turn" evidence="9">
    <location>
        <begin position="66"/>
        <end position="68"/>
    </location>
</feature>
<feature type="strand" evidence="9">
    <location>
        <begin position="69"/>
        <end position="74"/>
    </location>
</feature>
<feature type="helix" evidence="9">
    <location>
        <begin position="77"/>
        <end position="80"/>
    </location>
</feature>
<feature type="helix" evidence="9">
    <location>
        <begin position="82"/>
        <end position="93"/>
    </location>
</feature>
<dbReference type="EMBL" id="X99921">
    <property type="protein sequence ID" value="CAA68189.1"/>
    <property type="molecule type" value="mRNA"/>
</dbReference>
<dbReference type="EMBL" id="BC005687">
    <property type="protein sequence ID" value="AAH05687.1"/>
    <property type="molecule type" value="mRNA"/>
</dbReference>
<dbReference type="PIR" id="JC5065">
    <property type="entry name" value="JC5065"/>
</dbReference>
<dbReference type="RefSeq" id="NP_001397457.1">
    <property type="nucleotide sequence ID" value="NM_001410528.1"/>
</dbReference>
<dbReference type="RefSeq" id="NP_001397458.1">
    <property type="nucleotide sequence ID" value="NM_001410529.1"/>
</dbReference>
<dbReference type="RefSeq" id="NP_033139.3">
    <property type="nucleotide sequence ID" value="NM_009113.6"/>
</dbReference>
<dbReference type="PDB" id="2CXJ">
    <property type="method" value="NMR"/>
    <property type="chains" value="A/B=1-98"/>
</dbReference>
<dbReference type="PDBsum" id="2CXJ"/>
<dbReference type="BMRB" id="P97352"/>
<dbReference type="SMR" id="P97352"/>
<dbReference type="FunCoup" id="P97352">
    <property type="interactions" value="490"/>
</dbReference>
<dbReference type="STRING" id="10090.ENSMUSP00000047737"/>
<dbReference type="TCDB" id="9.A.48.1.1">
    <property type="family name" value="the unconventional protein secretion (ups) system family"/>
</dbReference>
<dbReference type="iPTMnet" id="P97352"/>
<dbReference type="PhosphoSitePlus" id="P97352"/>
<dbReference type="jPOST" id="P97352"/>
<dbReference type="PaxDb" id="10090-ENSMUSP00000047737"/>
<dbReference type="PeptideAtlas" id="P97352"/>
<dbReference type="ProteomicsDB" id="260964"/>
<dbReference type="Pumba" id="P97352"/>
<dbReference type="TopDownProteomics" id="P97352"/>
<dbReference type="Antibodypedia" id="34130">
    <property type="antibodies" value="186 antibodies from 30 providers"/>
</dbReference>
<dbReference type="DNASU" id="20196"/>
<dbReference type="Ensembl" id="ENSMUST00000048138.8">
    <property type="protein sequence ID" value="ENSMUSP00000047737.9"/>
    <property type="gene ID" value="ENSMUSG00000042312.12"/>
</dbReference>
<dbReference type="Ensembl" id="ENSMUST00000250017.1">
    <property type="protein sequence ID" value="ENSMUSP00000160100.1"/>
    <property type="gene ID" value="ENSMUSG00000042312.12"/>
</dbReference>
<dbReference type="GeneID" id="20196"/>
<dbReference type="KEGG" id="mmu:20196"/>
<dbReference type="AGR" id="MGI:109581"/>
<dbReference type="CTD" id="6284"/>
<dbReference type="MGI" id="MGI:109581">
    <property type="gene designation" value="S100a13"/>
</dbReference>
<dbReference type="VEuPathDB" id="HostDB:ENSMUSG00000042312"/>
<dbReference type="eggNOG" id="ENOG502S3RT">
    <property type="taxonomic scope" value="Eukaryota"/>
</dbReference>
<dbReference type="GeneTree" id="ENSGT00940000161854"/>
<dbReference type="InParanoid" id="P97352"/>
<dbReference type="OMA" id="TFFTFAK"/>
<dbReference type="OrthoDB" id="8442111at2759"/>
<dbReference type="PhylomeDB" id="P97352"/>
<dbReference type="TreeFam" id="TF332727"/>
<dbReference type="ChiTaRS" id="S100a13">
    <property type="organism name" value="mouse"/>
</dbReference>
<dbReference type="EvolutionaryTrace" id="P97352"/>
<dbReference type="PRO" id="PR:P97352"/>
<dbReference type="Proteomes" id="UP000000589">
    <property type="component" value="Chromosome 3"/>
</dbReference>
<dbReference type="RNAct" id="P97352">
    <property type="molecule type" value="protein"/>
</dbReference>
<dbReference type="Bgee" id="ENSMUSG00000042312">
    <property type="expression patterns" value="Expressed in gonadal fat pad and 226 other cell types or tissues"/>
</dbReference>
<dbReference type="ExpressionAtlas" id="P97352">
    <property type="expression patterns" value="baseline and differential"/>
</dbReference>
<dbReference type="GO" id="GO:0062023">
    <property type="term" value="C:collagen-containing extracellular matrix"/>
    <property type="evidence" value="ECO:0007005"/>
    <property type="project" value="BHF-UCL"/>
</dbReference>
<dbReference type="GO" id="GO:0005829">
    <property type="term" value="C:cytosol"/>
    <property type="evidence" value="ECO:0000250"/>
    <property type="project" value="UniProtKB"/>
</dbReference>
<dbReference type="GO" id="GO:0005615">
    <property type="term" value="C:extracellular space"/>
    <property type="evidence" value="ECO:0000314"/>
    <property type="project" value="MGI"/>
</dbReference>
<dbReference type="GO" id="GO:0005509">
    <property type="term" value="F:calcium ion binding"/>
    <property type="evidence" value="ECO:0000250"/>
    <property type="project" value="UniProtKB"/>
</dbReference>
<dbReference type="GO" id="GO:0005507">
    <property type="term" value="F:copper ion binding"/>
    <property type="evidence" value="ECO:0000250"/>
    <property type="project" value="UniProtKB"/>
</dbReference>
<dbReference type="GO" id="GO:0008289">
    <property type="term" value="F:lipid binding"/>
    <property type="evidence" value="ECO:0007669"/>
    <property type="project" value="UniProtKB-KW"/>
</dbReference>
<dbReference type="GO" id="GO:0001819">
    <property type="term" value="P:positive regulation of cytokine production"/>
    <property type="evidence" value="ECO:0000250"/>
    <property type="project" value="UniProtKB"/>
</dbReference>
<dbReference type="GO" id="GO:0032730">
    <property type="term" value="P:positive regulation of interleukin-1 alpha production"/>
    <property type="evidence" value="ECO:0000250"/>
    <property type="project" value="UniProtKB"/>
</dbReference>
<dbReference type="GO" id="GO:0015031">
    <property type="term" value="P:protein transport"/>
    <property type="evidence" value="ECO:0007669"/>
    <property type="project" value="UniProtKB-KW"/>
</dbReference>
<dbReference type="CDD" id="cd05022">
    <property type="entry name" value="S-100A13"/>
    <property type="match status" value="1"/>
</dbReference>
<dbReference type="Gene3D" id="1.10.238.10">
    <property type="entry name" value="EF-hand"/>
    <property type="match status" value="1"/>
</dbReference>
<dbReference type="InterPro" id="IPR011992">
    <property type="entry name" value="EF-hand-dom_pair"/>
</dbReference>
<dbReference type="InterPro" id="IPR013787">
    <property type="entry name" value="S100_Ca-bd_sub"/>
</dbReference>
<dbReference type="PANTHER" id="PTHR11639:SF57">
    <property type="entry name" value="PROTEIN S100-A13"/>
    <property type="match status" value="1"/>
</dbReference>
<dbReference type="PANTHER" id="PTHR11639">
    <property type="entry name" value="S100 CALCIUM-BINDING PROTEIN"/>
    <property type="match status" value="1"/>
</dbReference>
<dbReference type="Pfam" id="PF01023">
    <property type="entry name" value="S_100"/>
    <property type="match status" value="1"/>
</dbReference>
<dbReference type="SMART" id="SM01394">
    <property type="entry name" value="S_100"/>
    <property type="match status" value="1"/>
</dbReference>
<dbReference type="SUPFAM" id="SSF47473">
    <property type="entry name" value="EF-hand"/>
    <property type="match status" value="1"/>
</dbReference>
<comment type="function">
    <text evidence="3 4 5">Plays a role in the export of proteins that lack a signal peptide and are secreted by an alternative pathway. Binds two calcium ions per subunit. Binds one copper ion. Binding of one copper ion does not interfere with calcium binding. Required for the copper-dependent stress-induced export of IL1A and FGF1. The calcium-free protein binds to lipid vesicles containing phosphatidylserine, but not to vesicles containing phosphatidylcholine.</text>
</comment>
<comment type="subunit">
    <text evidence="2 3 5 6">Homodimer. Part of a copper-dependent multiprotein complex containing S100A13, FGF1 and SYT1. Interacts with FGF1 and SYT1. Interacts with IL1A (By similarity).</text>
</comment>
<comment type="subcellular location">
    <subcellularLocation>
        <location>Cytoplasm</location>
    </subcellularLocation>
    <subcellularLocation>
        <location>Secreted</location>
    </subcellularLocation>
    <text>Secretion is mediated by exposure to stress and requires copper ions.</text>
</comment>
<comment type="similarity">
    <text evidence="7">Belongs to the S-100 family.</text>
</comment>
<reference key="1">
    <citation type="journal article" date="1996" name="Biochem. Biophys. Res. Commun.">
        <title>Characterization of the human and mouse cDNAs coding for S100A13, a new member of the S100 protein family.</title>
        <authorList>
            <person name="Wicki R."/>
            <person name="Schaefer B.W."/>
            <person name="Erne P."/>
            <person name="Heizmann C.W."/>
        </authorList>
    </citation>
    <scope>NUCLEOTIDE SEQUENCE [MRNA]</scope>
</reference>
<reference key="2">
    <citation type="journal article" date="2004" name="Genome Res.">
        <title>The status, quality, and expansion of the NIH full-length cDNA project: the Mammalian Gene Collection (MGC).</title>
        <authorList>
            <consortium name="The MGC Project Team"/>
        </authorList>
    </citation>
    <scope>NUCLEOTIDE SEQUENCE [LARGE SCALE MRNA]</scope>
    <source>
        <tissue>Mammary tumor</tissue>
    </source>
</reference>
<reference key="3">
    <citation type="journal article" date="2002" name="J. Cell Biol.">
        <title>The intracellular translocation of the components of the fibroblast growth factor 1 release complex precedes their assembly prior to export.</title>
        <authorList>
            <person name="Prudovsky I."/>
            <person name="Bagala C."/>
            <person name="Tarantini F."/>
            <person name="Mandinova A."/>
            <person name="Soldi R."/>
            <person name="Bellum S."/>
            <person name="Maciag T."/>
        </authorList>
    </citation>
    <scope>SUBCELLULAR LOCATION</scope>
</reference>
<reference key="4">
    <citation type="journal article" date="2003" name="J. Cell Sci.">
        <title>S100A13 mediates the copper-dependent stress-induced release of IL-1alpha from both human U937 and murine NIH 3T3 cells.</title>
        <authorList>
            <person name="Mandinova A."/>
            <person name="Soldi R."/>
            <person name="Graziani I."/>
            <person name="Bagala C."/>
            <person name="Bellum S."/>
            <person name="Landriscina M."/>
            <person name="Tarantini F."/>
            <person name="Prudovsky I."/>
            <person name="Maciag T."/>
        </authorList>
    </citation>
    <scope>FUNCTION</scope>
    <scope>SUBCELLULAR LOCATION</scope>
</reference>
<reference key="5">
    <citation type="journal article" date="2007" name="Biochim. Biophys. Acta">
        <title>S100A13-lipid interactions-role in the non-classical release of the acidic fibroblast growth factor.</title>
        <authorList>
            <person name="Kathir K.M."/>
            <person name="Ibrahim K."/>
            <person name="Rajalingam D."/>
            <person name="Prudovsky I."/>
            <person name="Yu C."/>
            <person name="Kumar T.K."/>
        </authorList>
    </citation>
    <scope>FUNCTION</scope>
    <scope>INTERACTION WITH LIPID VESICLES</scope>
</reference>
<reference key="6">
    <citation type="journal article" date="2001" name="J. Biol. Chem.">
        <title>Copper induces the assembly of a multiprotein aggregate implicated in the release of fibroblast growth factor 1 in response to stress.</title>
        <authorList>
            <person name="Landriscina M."/>
            <person name="Bagala C."/>
            <person name="Mandinova A."/>
            <person name="Soldi R."/>
            <person name="Micucci I."/>
            <person name="Bellum S."/>
            <person name="Prudovsky I."/>
            <person name="Maciag T."/>
        </authorList>
    </citation>
    <scope>FUNCTION</scope>
    <scope>INTERACTION WITH SYT1 AND FGF1</scope>
    <scope>COPPER BINDING</scope>
    <scope>IDENTIFICATION IN A COPPER-DEPENDENT MULTIPROTEIN COMPLEX CONTAINING SYT1; FGF1 AND S100A13</scope>
</reference>
<reference key="7">
    <citation type="journal article" date="2009" name="Biochem. Biophys. Res. Commun.">
        <title>Protein folding does not prevent the nonclassical export of FGF1 and S100A13.</title>
        <authorList>
            <person name="Graziani I."/>
            <person name="Doyle A."/>
            <person name="Sterling S."/>
            <person name="Kirov A."/>
            <person name="Tarantini F."/>
            <person name="Landriscina M."/>
            <person name="Kumar T.K."/>
            <person name="Neivandt D."/>
            <person name="Prudovsky I."/>
        </authorList>
    </citation>
    <scope>SUBCELLULAR LOCATION</scope>
</reference>
<reference key="8">
    <citation type="journal article" date="2010" name="Cell">
        <title>A tissue-specific atlas of mouse protein phosphorylation and expression.</title>
        <authorList>
            <person name="Huttlin E.L."/>
            <person name="Jedrychowski M.P."/>
            <person name="Elias J.E."/>
            <person name="Goswami T."/>
            <person name="Rad R."/>
            <person name="Beausoleil S.A."/>
            <person name="Villen J."/>
            <person name="Haas W."/>
            <person name="Sowa M.E."/>
            <person name="Gygi S.P."/>
        </authorList>
    </citation>
    <scope>PHOSPHORYLATION [LARGE SCALE ANALYSIS] AT SER-32</scope>
    <scope>IDENTIFICATION BY MASS SPECTROMETRY [LARGE SCALE ANALYSIS]</scope>
    <source>
        <tissue>Brain</tissue>
        <tissue>Brown adipose tissue</tissue>
        <tissue>Heart</tissue>
        <tissue>Kidney</tissue>
        <tissue>Liver</tissue>
        <tissue>Lung</tissue>
        <tissue>Spleen</tissue>
    </source>
</reference>
<reference key="9">
    <citation type="submission" date="2009-02" db="PDB data bank">
        <title>Three-dimensional solution structure of S100A13.</title>
        <authorList>
            <person name="Vaithiyalingam S."/>
            <person name="Kumar T.K.S."/>
            <person name="Yu C."/>
        </authorList>
    </citation>
    <scope>STRUCTURE BY NMR</scope>
    <scope>SUBUNIT</scope>
</reference>
<proteinExistence type="evidence at protein level"/>
<keyword id="KW-0002">3D-structure</keyword>
<keyword id="KW-0106">Calcium</keyword>
<keyword id="KW-0186">Copper</keyword>
<keyword id="KW-0963">Cytoplasm</keyword>
<keyword id="KW-0446">Lipid-binding</keyword>
<keyword id="KW-0479">Metal-binding</keyword>
<keyword id="KW-0597">Phosphoprotein</keyword>
<keyword id="KW-0653">Protein transport</keyword>
<keyword id="KW-1185">Reference proteome</keyword>
<keyword id="KW-0677">Repeat</keyword>
<keyword id="KW-0964">Secreted</keyword>
<keyword id="KW-0813">Transport</keyword>
<evidence type="ECO:0000250" key="1"/>
<evidence type="ECO:0000250" key="2">
    <source>
        <dbReference type="UniProtKB" id="Q99584"/>
    </source>
</evidence>
<evidence type="ECO:0000269" key="3">
    <source>
    </source>
</evidence>
<evidence type="ECO:0000269" key="4">
    <source>
    </source>
</evidence>
<evidence type="ECO:0000269" key="5">
    <source>
    </source>
</evidence>
<evidence type="ECO:0000269" key="6">
    <source ref="9"/>
</evidence>
<evidence type="ECO:0000305" key="7"/>
<evidence type="ECO:0007744" key="8">
    <source>
    </source>
</evidence>
<evidence type="ECO:0007829" key="9">
    <source>
        <dbReference type="PDB" id="2CXJ"/>
    </source>
</evidence>
<organism>
    <name type="scientific">Mus musculus</name>
    <name type="common">Mouse</name>
    <dbReference type="NCBI Taxonomy" id="10090"/>
    <lineage>
        <taxon>Eukaryota</taxon>
        <taxon>Metazoa</taxon>
        <taxon>Chordata</taxon>
        <taxon>Craniata</taxon>
        <taxon>Vertebrata</taxon>
        <taxon>Euteleostomi</taxon>
        <taxon>Mammalia</taxon>
        <taxon>Eutheria</taxon>
        <taxon>Euarchontoglires</taxon>
        <taxon>Glires</taxon>
        <taxon>Rodentia</taxon>
        <taxon>Myomorpha</taxon>
        <taxon>Muroidea</taxon>
        <taxon>Muridae</taxon>
        <taxon>Murinae</taxon>
        <taxon>Mus</taxon>
        <taxon>Mus</taxon>
    </lineage>
</organism>
<gene>
    <name type="primary">S100a13</name>
</gene>
<accession>P97352</accession>